<sequence length="246" mass="26466">MPAKLSVNLNAIAMLRNRRDLPWPSVTGLGRAALAAGAAGLTVHPRPDQRHIRFSDLGDIRALIDDEYPQAEFNIEGFPSEAFLDLVEKHEPEQVTLVPDDPMQATSDHGWDFMSKADFLAPIVARLKGRGMRVSLFADPDSLGYERAKAIGADRVELYTGPYGATHDDPAAAARELDRLEKAARAATALGLAVNAGHDLTVDNLPALVKRIPQLAEVSIGHGLTADALMYGIPVTVSRYITALAG</sequence>
<proteinExistence type="inferred from homology"/>
<protein>
    <recommendedName>
        <fullName evidence="1">Pyridoxine 5'-phosphate synthase</fullName>
        <shortName evidence="1">PNP synthase</shortName>
        <ecNumber evidence="1">2.6.99.2</ecNumber>
    </recommendedName>
</protein>
<reference key="1">
    <citation type="journal article" date="2008" name="PLoS ONE">
        <title>Genome sequence of Brucella abortus vaccine strain S19 compared to virulent strains yields candidate virulence genes.</title>
        <authorList>
            <person name="Crasta O.R."/>
            <person name="Folkerts O."/>
            <person name="Fei Z."/>
            <person name="Mane S.P."/>
            <person name="Evans C."/>
            <person name="Martino-Catt S."/>
            <person name="Bricker B."/>
            <person name="Yu G."/>
            <person name="Du L."/>
            <person name="Sobral B.W."/>
        </authorList>
    </citation>
    <scope>NUCLEOTIDE SEQUENCE [LARGE SCALE GENOMIC DNA]</scope>
    <source>
        <strain>S19</strain>
    </source>
</reference>
<name>PDXJ_BRUA1</name>
<dbReference type="EC" id="2.6.99.2" evidence="1"/>
<dbReference type="EMBL" id="CP000887">
    <property type="protein sequence ID" value="ACD72807.1"/>
    <property type="molecule type" value="Genomic_DNA"/>
</dbReference>
<dbReference type="RefSeq" id="WP_002964495.1">
    <property type="nucleotide sequence ID" value="NC_010742.1"/>
</dbReference>
<dbReference type="SMR" id="B2S6L0"/>
<dbReference type="KEGG" id="bmc:BAbS19_I13120"/>
<dbReference type="HOGENOM" id="CLU_074563_1_0_5"/>
<dbReference type="UniPathway" id="UPA00244">
    <property type="reaction ID" value="UER00313"/>
</dbReference>
<dbReference type="Proteomes" id="UP000002565">
    <property type="component" value="Chromosome 1"/>
</dbReference>
<dbReference type="GO" id="GO:0005829">
    <property type="term" value="C:cytosol"/>
    <property type="evidence" value="ECO:0007669"/>
    <property type="project" value="TreeGrafter"/>
</dbReference>
<dbReference type="GO" id="GO:0033856">
    <property type="term" value="F:pyridoxine 5'-phosphate synthase activity"/>
    <property type="evidence" value="ECO:0007669"/>
    <property type="project" value="UniProtKB-EC"/>
</dbReference>
<dbReference type="GO" id="GO:0008615">
    <property type="term" value="P:pyridoxine biosynthetic process"/>
    <property type="evidence" value="ECO:0007669"/>
    <property type="project" value="UniProtKB-UniRule"/>
</dbReference>
<dbReference type="CDD" id="cd00003">
    <property type="entry name" value="PNPsynthase"/>
    <property type="match status" value="1"/>
</dbReference>
<dbReference type="Gene3D" id="3.20.20.70">
    <property type="entry name" value="Aldolase class I"/>
    <property type="match status" value="1"/>
</dbReference>
<dbReference type="HAMAP" id="MF_00279">
    <property type="entry name" value="PdxJ"/>
    <property type="match status" value="1"/>
</dbReference>
<dbReference type="InterPro" id="IPR013785">
    <property type="entry name" value="Aldolase_TIM"/>
</dbReference>
<dbReference type="InterPro" id="IPR004569">
    <property type="entry name" value="PyrdxlP_synth_PdxJ"/>
</dbReference>
<dbReference type="InterPro" id="IPR036130">
    <property type="entry name" value="Pyridoxine-5'_phos_synth"/>
</dbReference>
<dbReference type="NCBIfam" id="TIGR00559">
    <property type="entry name" value="pdxJ"/>
    <property type="match status" value="1"/>
</dbReference>
<dbReference type="NCBIfam" id="NF003626">
    <property type="entry name" value="PRK05265.1-4"/>
    <property type="match status" value="1"/>
</dbReference>
<dbReference type="PANTHER" id="PTHR30456">
    <property type="entry name" value="PYRIDOXINE 5'-PHOSPHATE SYNTHASE"/>
    <property type="match status" value="1"/>
</dbReference>
<dbReference type="PANTHER" id="PTHR30456:SF0">
    <property type="entry name" value="PYRIDOXINE 5'-PHOSPHATE SYNTHASE"/>
    <property type="match status" value="1"/>
</dbReference>
<dbReference type="Pfam" id="PF03740">
    <property type="entry name" value="PdxJ"/>
    <property type="match status" value="1"/>
</dbReference>
<dbReference type="SUPFAM" id="SSF63892">
    <property type="entry name" value="Pyridoxine 5'-phosphate synthase"/>
    <property type="match status" value="1"/>
</dbReference>
<gene>
    <name evidence="1" type="primary">pdxJ</name>
    <name type="ordered locus">BAbS19_I13120</name>
</gene>
<evidence type="ECO:0000255" key="1">
    <source>
        <dbReference type="HAMAP-Rule" id="MF_00279"/>
    </source>
</evidence>
<feature type="chain" id="PRO_1000114801" description="Pyridoxine 5'-phosphate synthase">
    <location>
        <begin position="1"/>
        <end position="246"/>
    </location>
</feature>
<feature type="active site" description="Proton acceptor" evidence="1">
    <location>
        <position position="44"/>
    </location>
</feature>
<feature type="active site" description="Proton acceptor" evidence="1">
    <location>
        <position position="76"/>
    </location>
</feature>
<feature type="active site" description="Proton donor" evidence="1">
    <location>
        <position position="198"/>
    </location>
</feature>
<feature type="binding site" evidence="1">
    <location>
        <position position="8"/>
    </location>
    <ligand>
        <name>3-amino-2-oxopropyl phosphate</name>
        <dbReference type="ChEBI" id="CHEBI:57279"/>
    </ligand>
</feature>
<feature type="binding site" evidence="1">
    <location>
        <position position="19"/>
    </location>
    <ligand>
        <name>3-amino-2-oxopropyl phosphate</name>
        <dbReference type="ChEBI" id="CHEBI:57279"/>
    </ligand>
</feature>
<feature type="binding site" evidence="1">
    <location>
        <position position="46"/>
    </location>
    <ligand>
        <name>1-deoxy-D-xylulose 5-phosphate</name>
        <dbReference type="ChEBI" id="CHEBI:57792"/>
    </ligand>
</feature>
<feature type="binding site" evidence="1">
    <location>
        <position position="51"/>
    </location>
    <ligand>
        <name>1-deoxy-D-xylulose 5-phosphate</name>
        <dbReference type="ChEBI" id="CHEBI:57792"/>
    </ligand>
</feature>
<feature type="binding site" evidence="1">
    <location>
        <position position="106"/>
    </location>
    <ligand>
        <name>1-deoxy-D-xylulose 5-phosphate</name>
        <dbReference type="ChEBI" id="CHEBI:57792"/>
    </ligand>
</feature>
<feature type="binding site" evidence="1">
    <location>
        <position position="199"/>
    </location>
    <ligand>
        <name>3-amino-2-oxopropyl phosphate</name>
        <dbReference type="ChEBI" id="CHEBI:57279"/>
    </ligand>
</feature>
<feature type="binding site" evidence="1">
    <location>
        <begin position="221"/>
        <end position="222"/>
    </location>
    <ligand>
        <name>3-amino-2-oxopropyl phosphate</name>
        <dbReference type="ChEBI" id="CHEBI:57279"/>
    </ligand>
</feature>
<feature type="site" description="Transition state stabilizer" evidence="1">
    <location>
        <position position="157"/>
    </location>
</feature>
<organism>
    <name type="scientific">Brucella abortus (strain S19)</name>
    <dbReference type="NCBI Taxonomy" id="430066"/>
    <lineage>
        <taxon>Bacteria</taxon>
        <taxon>Pseudomonadati</taxon>
        <taxon>Pseudomonadota</taxon>
        <taxon>Alphaproteobacteria</taxon>
        <taxon>Hyphomicrobiales</taxon>
        <taxon>Brucellaceae</taxon>
        <taxon>Brucella/Ochrobactrum group</taxon>
        <taxon>Brucella</taxon>
    </lineage>
</organism>
<accession>B2S6L0</accession>
<keyword id="KW-0963">Cytoplasm</keyword>
<keyword id="KW-0664">Pyridoxine biosynthesis</keyword>
<keyword id="KW-0808">Transferase</keyword>
<comment type="function">
    <text evidence="1">Catalyzes the complicated ring closure reaction between the two acyclic compounds 1-deoxy-D-xylulose-5-phosphate (DXP) and 3-amino-2-oxopropyl phosphate (1-amino-acetone-3-phosphate or AAP) to form pyridoxine 5'-phosphate (PNP) and inorganic phosphate.</text>
</comment>
<comment type="catalytic activity">
    <reaction evidence="1">
        <text>3-amino-2-oxopropyl phosphate + 1-deoxy-D-xylulose 5-phosphate = pyridoxine 5'-phosphate + phosphate + 2 H2O + H(+)</text>
        <dbReference type="Rhea" id="RHEA:15265"/>
        <dbReference type="ChEBI" id="CHEBI:15377"/>
        <dbReference type="ChEBI" id="CHEBI:15378"/>
        <dbReference type="ChEBI" id="CHEBI:43474"/>
        <dbReference type="ChEBI" id="CHEBI:57279"/>
        <dbReference type="ChEBI" id="CHEBI:57792"/>
        <dbReference type="ChEBI" id="CHEBI:58589"/>
        <dbReference type="EC" id="2.6.99.2"/>
    </reaction>
</comment>
<comment type="pathway">
    <text evidence="1">Cofactor biosynthesis; pyridoxine 5'-phosphate biosynthesis; pyridoxine 5'-phosphate from D-erythrose 4-phosphate: step 5/5.</text>
</comment>
<comment type="subunit">
    <text evidence="1">Homooctamer; tetramer of dimers.</text>
</comment>
<comment type="subcellular location">
    <subcellularLocation>
        <location evidence="1">Cytoplasm</location>
    </subcellularLocation>
</comment>
<comment type="similarity">
    <text evidence="1">Belongs to the PNP synthase family.</text>
</comment>